<feature type="chain" id="PRO_1000119400" description="Phenylalanine--tRNA ligase alpha subunit">
    <location>
        <begin position="1"/>
        <end position="343"/>
    </location>
</feature>
<feature type="binding site" evidence="1">
    <location>
        <position position="256"/>
    </location>
    <ligand>
        <name>Mg(2+)</name>
        <dbReference type="ChEBI" id="CHEBI:18420"/>
        <note>shared with beta subunit</note>
    </ligand>
</feature>
<dbReference type="EC" id="6.1.1.20" evidence="1"/>
<dbReference type="EMBL" id="AM422018">
    <property type="protein sequence ID" value="CAM11866.1"/>
    <property type="molecule type" value="Genomic_DNA"/>
</dbReference>
<dbReference type="SMR" id="B1VA93"/>
<dbReference type="STRING" id="59748.PA0532"/>
<dbReference type="KEGG" id="pal:PA0532"/>
<dbReference type="eggNOG" id="COG0016">
    <property type="taxonomic scope" value="Bacteria"/>
</dbReference>
<dbReference type="Proteomes" id="UP000008323">
    <property type="component" value="Chromosome"/>
</dbReference>
<dbReference type="GO" id="GO:0005737">
    <property type="term" value="C:cytoplasm"/>
    <property type="evidence" value="ECO:0007669"/>
    <property type="project" value="UniProtKB-SubCell"/>
</dbReference>
<dbReference type="GO" id="GO:0005524">
    <property type="term" value="F:ATP binding"/>
    <property type="evidence" value="ECO:0007669"/>
    <property type="project" value="UniProtKB-UniRule"/>
</dbReference>
<dbReference type="GO" id="GO:0000287">
    <property type="term" value="F:magnesium ion binding"/>
    <property type="evidence" value="ECO:0007669"/>
    <property type="project" value="UniProtKB-UniRule"/>
</dbReference>
<dbReference type="GO" id="GO:0004826">
    <property type="term" value="F:phenylalanine-tRNA ligase activity"/>
    <property type="evidence" value="ECO:0007669"/>
    <property type="project" value="UniProtKB-UniRule"/>
</dbReference>
<dbReference type="GO" id="GO:0000049">
    <property type="term" value="F:tRNA binding"/>
    <property type="evidence" value="ECO:0007669"/>
    <property type="project" value="InterPro"/>
</dbReference>
<dbReference type="GO" id="GO:0006432">
    <property type="term" value="P:phenylalanyl-tRNA aminoacylation"/>
    <property type="evidence" value="ECO:0007669"/>
    <property type="project" value="UniProtKB-UniRule"/>
</dbReference>
<dbReference type="CDD" id="cd00496">
    <property type="entry name" value="PheRS_alpha_core"/>
    <property type="match status" value="1"/>
</dbReference>
<dbReference type="Gene3D" id="3.30.930.10">
    <property type="entry name" value="Bira Bifunctional Protein, Domain 2"/>
    <property type="match status" value="1"/>
</dbReference>
<dbReference type="HAMAP" id="MF_00281">
    <property type="entry name" value="Phe_tRNA_synth_alpha1"/>
    <property type="match status" value="1"/>
</dbReference>
<dbReference type="InterPro" id="IPR006195">
    <property type="entry name" value="aa-tRNA-synth_II"/>
</dbReference>
<dbReference type="InterPro" id="IPR045864">
    <property type="entry name" value="aa-tRNA-synth_II/BPL/LPL"/>
</dbReference>
<dbReference type="InterPro" id="IPR004529">
    <property type="entry name" value="Phe-tRNA-synth_IIc_asu"/>
</dbReference>
<dbReference type="InterPro" id="IPR004188">
    <property type="entry name" value="Phe-tRNA_ligase_II_N"/>
</dbReference>
<dbReference type="InterPro" id="IPR022911">
    <property type="entry name" value="Phe_tRNA_ligase_alpha1_bac"/>
</dbReference>
<dbReference type="InterPro" id="IPR002319">
    <property type="entry name" value="Phenylalanyl-tRNA_Synthase"/>
</dbReference>
<dbReference type="InterPro" id="IPR010978">
    <property type="entry name" value="tRNA-bd_arm"/>
</dbReference>
<dbReference type="NCBIfam" id="TIGR00468">
    <property type="entry name" value="pheS"/>
    <property type="match status" value="1"/>
</dbReference>
<dbReference type="PANTHER" id="PTHR11538:SF41">
    <property type="entry name" value="PHENYLALANINE--TRNA LIGASE, MITOCHONDRIAL"/>
    <property type="match status" value="1"/>
</dbReference>
<dbReference type="PANTHER" id="PTHR11538">
    <property type="entry name" value="PHENYLALANYL-TRNA SYNTHETASE"/>
    <property type="match status" value="1"/>
</dbReference>
<dbReference type="Pfam" id="PF02912">
    <property type="entry name" value="Phe_tRNA-synt_N"/>
    <property type="match status" value="1"/>
</dbReference>
<dbReference type="Pfam" id="PF01409">
    <property type="entry name" value="tRNA-synt_2d"/>
    <property type="match status" value="1"/>
</dbReference>
<dbReference type="SUPFAM" id="SSF55681">
    <property type="entry name" value="Class II aaRS and biotin synthetases"/>
    <property type="match status" value="1"/>
</dbReference>
<dbReference type="SUPFAM" id="SSF46589">
    <property type="entry name" value="tRNA-binding arm"/>
    <property type="match status" value="1"/>
</dbReference>
<dbReference type="PROSITE" id="PS50862">
    <property type="entry name" value="AA_TRNA_LIGASE_II"/>
    <property type="match status" value="1"/>
</dbReference>
<organism>
    <name type="scientific">Phytoplasma australiense</name>
    <dbReference type="NCBI Taxonomy" id="59748"/>
    <lineage>
        <taxon>Bacteria</taxon>
        <taxon>Bacillati</taxon>
        <taxon>Mycoplasmatota</taxon>
        <taxon>Mollicutes</taxon>
        <taxon>Acholeplasmatales</taxon>
        <taxon>Acholeplasmataceae</taxon>
        <taxon>Candidatus Phytoplasma</taxon>
        <taxon>16SrXII (Stolbur group)</taxon>
    </lineage>
</organism>
<name>SYFA_PHYAS</name>
<protein>
    <recommendedName>
        <fullName evidence="1">Phenylalanine--tRNA ligase alpha subunit</fullName>
        <ecNumber evidence="1">6.1.1.20</ecNumber>
    </recommendedName>
    <alternativeName>
        <fullName evidence="1">Phenylalanyl-tRNA synthetase alpha subunit</fullName>
        <shortName evidence="1">PheRS</shortName>
    </alternativeName>
</protein>
<proteinExistence type="inferred from homology"/>
<sequence length="343" mass="39999">MHNKINLLKEKFEHDLAKNKNSLENLIYLEQKFLGKKSFLQELNQTLKNIPSEKKPAIGKLINEFKKTIILSLQKEKQYLKTQKMNLELMQESVDVNLPGFNFSTGSIHPLYQIIEQLEDLFLSLGYEIKDGNEIESDFYNFEMLNIGKNHPARAMQDSFYINPQKLLRTHTSNIQVKEMLANEGKPLKIISSGKVFRKDNDDATHSHQFMQLEGLVIDQKINFLNLKETILTIIKELFGDSQEINIRPSYFPFTEPSIEVDLVIRKKDNSKEYLEILGAGLVHPQVLLNANYNPEKYQGFAFGIGIERIAMIKYQIENIRHFYQNDIRFLKQFSKKVKHENS</sequence>
<evidence type="ECO:0000255" key="1">
    <source>
        <dbReference type="HAMAP-Rule" id="MF_00281"/>
    </source>
</evidence>
<reference key="1">
    <citation type="journal article" date="2008" name="J. Bacteriol.">
        <title>Comparative genome analysis of 'Candidatus Phytoplasma australiense' (subgroup tuf-Australia I; rp-A) and 'Ca. Phytoplasma asteris' strains OY-M and AY-WB.</title>
        <authorList>
            <person name="Tran-Nguyen L.T."/>
            <person name="Kube M."/>
            <person name="Schneider B."/>
            <person name="Reinhardt R."/>
            <person name="Gibb K.S."/>
        </authorList>
    </citation>
    <scope>NUCLEOTIDE SEQUENCE [LARGE SCALE GENOMIC DNA]</scope>
</reference>
<keyword id="KW-0030">Aminoacyl-tRNA synthetase</keyword>
<keyword id="KW-0067">ATP-binding</keyword>
<keyword id="KW-0963">Cytoplasm</keyword>
<keyword id="KW-0436">Ligase</keyword>
<keyword id="KW-0460">Magnesium</keyword>
<keyword id="KW-0479">Metal-binding</keyword>
<keyword id="KW-0547">Nucleotide-binding</keyword>
<keyword id="KW-0648">Protein biosynthesis</keyword>
<keyword id="KW-1185">Reference proteome</keyword>
<gene>
    <name evidence="1" type="primary">pheS</name>
    <name type="ordered locus">PA0532</name>
</gene>
<comment type="catalytic activity">
    <reaction evidence="1">
        <text>tRNA(Phe) + L-phenylalanine + ATP = L-phenylalanyl-tRNA(Phe) + AMP + diphosphate + H(+)</text>
        <dbReference type="Rhea" id="RHEA:19413"/>
        <dbReference type="Rhea" id="RHEA-COMP:9668"/>
        <dbReference type="Rhea" id="RHEA-COMP:9699"/>
        <dbReference type="ChEBI" id="CHEBI:15378"/>
        <dbReference type="ChEBI" id="CHEBI:30616"/>
        <dbReference type="ChEBI" id="CHEBI:33019"/>
        <dbReference type="ChEBI" id="CHEBI:58095"/>
        <dbReference type="ChEBI" id="CHEBI:78442"/>
        <dbReference type="ChEBI" id="CHEBI:78531"/>
        <dbReference type="ChEBI" id="CHEBI:456215"/>
        <dbReference type="EC" id="6.1.1.20"/>
    </reaction>
</comment>
<comment type="cofactor">
    <cofactor evidence="1">
        <name>Mg(2+)</name>
        <dbReference type="ChEBI" id="CHEBI:18420"/>
    </cofactor>
    <text evidence="1">Binds 2 magnesium ions per tetramer.</text>
</comment>
<comment type="subunit">
    <text evidence="1">Tetramer of two alpha and two beta subunits.</text>
</comment>
<comment type="subcellular location">
    <subcellularLocation>
        <location evidence="1">Cytoplasm</location>
    </subcellularLocation>
</comment>
<comment type="similarity">
    <text evidence="1">Belongs to the class-II aminoacyl-tRNA synthetase family. Phe-tRNA synthetase alpha subunit type 1 subfamily.</text>
</comment>
<accession>B1VA93</accession>